<reference key="1">
    <citation type="journal article" date="1996" name="Mol. Microbiol.">
        <title>Exoenzyme S of Pseudomonas aeruginosa is secreted by a type III pathway.</title>
        <authorList>
            <person name="Yahr T.L."/>
            <person name="Goranson J."/>
            <person name="Frank D.W."/>
        </authorList>
    </citation>
    <scope>NUCLEOTIDE SEQUENCE [GENOMIC DNA]</scope>
    <source>
        <strain>388</strain>
    </source>
</reference>
<reference key="2">
    <citation type="journal article" date="2000" name="Nature">
        <title>Complete genome sequence of Pseudomonas aeruginosa PAO1, an opportunistic pathogen.</title>
        <authorList>
            <person name="Stover C.K."/>
            <person name="Pham X.-Q.T."/>
            <person name="Erwin A.L."/>
            <person name="Mizoguchi S.D."/>
            <person name="Warrener P."/>
            <person name="Hickey M.J."/>
            <person name="Brinkman F.S.L."/>
            <person name="Hufnagle W.O."/>
            <person name="Kowalik D.J."/>
            <person name="Lagrou M."/>
            <person name="Garber R.L."/>
            <person name="Goltry L."/>
            <person name="Tolentino E."/>
            <person name="Westbrock-Wadman S."/>
            <person name="Yuan Y."/>
            <person name="Brody L.L."/>
            <person name="Coulter S.N."/>
            <person name="Folger K.R."/>
            <person name="Kas A."/>
            <person name="Larbig K."/>
            <person name="Lim R.M."/>
            <person name="Smith K.A."/>
            <person name="Spencer D.H."/>
            <person name="Wong G.K.-S."/>
            <person name="Wu Z."/>
            <person name="Paulsen I.T."/>
            <person name="Reizer J."/>
            <person name="Saier M.H. Jr."/>
            <person name="Hancock R.E.W."/>
            <person name="Lory S."/>
            <person name="Olson M.V."/>
        </authorList>
    </citation>
    <scope>NUCLEOTIDE SEQUENCE [LARGE SCALE GENOMIC DNA]</scope>
    <source>
        <strain>ATCC 15692 / DSM 22644 / CIP 104116 / JCM 14847 / LMG 12228 / 1C / PRS 101 / PAO1</strain>
    </source>
</reference>
<reference key="3">
    <citation type="journal article" date="2005" name="FEMS Microbiol. Lett.">
        <title>PscF is a major component of the Pseudomonas aeruginosa type III secretion needle.</title>
        <authorList>
            <person name="Pastor A."/>
            <person name="Chabert J."/>
            <person name="Louwagie M."/>
            <person name="Garin J."/>
            <person name="Attree I."/>
        </authorList>
    </citation>
    <scope>FUNCTION</scope>
    <scope>IDENTIFICATION BY MASS SPECTROMETRY</scope>
    <source>
        <strain>CHA</strain>
    </source>
</reference>
<reference key="4">
    <citation type="journal article" date="2005" name="J. Biol. Chem.">
        <title>The PscE-PscF-PscG complex controls type III secretion needle biogenesis in Pseudomonas aeruginosa.</title>
        <authorList>
            <person name="Quinaud M."/>
            <person name="Chabert J."/>
            <person name="Faudry E."/>
            <person name="Neumann E."/>
            <person name="Lemaire D."/>
            <person name="Pastor A."/>
            <person name="Elsen S."/>
            <person name="Dessen A."/>
            <person name="Attree I."/>
        </authorList>
    </citation>
    <scope>FUNCTION</scope>
    <scope>SUBUNIT</scope>
    <scope>MASS SPECTROMETRY</scope>
    <scope>SUBCELLULAR LOCATION</scope>
    <scope>INTERACTION WITH PSCE AND PSCG</scope>
    <source>
        <strain>CHA</strain>
    </source>
</reference>
<reference key="5">
    <citation type="journal article" date="2019" name="Front. Microbiol.">
        <title>Structural and Functional Characterization of the Type Three Secretion System (T3SS) Needle of Pseudomonas aeruginosa.</title>
        <authorList>
            <person name="Lombardi C."/>
            <person name="Tolchard J."/>
            <person name="Bouillot S."/>
            <person name="Signor L."/>
            <person name="Gebus C."/>
            <person name="Liebl D."/>
            <person name="Fenel D."/>
            <person name="Teulon J.M."/>
            <person name="Brock J."/>
            <person name="Habenstein B."/>
            <person name="Pellequer J.L."/>
            <person name="Faudry E."/>
            <person name="Loquet A."/>
            <person name="Attree I."/>
            <person name="Dessen A."/>
            <person name="Job V."/>
        </authorList>
    </citation>
    <scope>FUNCTION</scope>
    <scope>MUTAGENESIS OF ASP-76</scope>
    <scope>SUBCELLULAR LOCATION</scope>
    <source>
        <strain>CHA</strain>
    </source>
</reference>
<reference key="6">
    <citation type="journal article" date="2020" name="J. Bacteriol.">
        <title>A Structure-Function-Inhibition Analysis of the P. aeruginosa Type III Secretion Needle Protein PscF.</title>
        <authorList>
            <person name="Moir D.T."/>
            <person name="Bowlin N.O."/>
            <person name="Berube B.J."/>
            <person name="Yabut J."/>
            <person name="Mills D.M."/>
            <person name="Nguyen G.T."/>
            <person name="Aron Z.D."/>
            <person name="Williams J.D."/>
            <person name="Mecsas J."/>
            <person name="Hauser A.R."/>
            <person name="Bowlin T.L."/>
        </authorList>
    </citation>
    <scope>FUNCTION</scope>
    <scope>MUTAGENESIS OF ASP-14 AND GLN-83</scope>
    <source>
        <strain>ATCC 15692 / DSM 22644 / CIP 104116 / JCM 14847 / LMG 12228 / 1C / PRS 101 / PAO1</strain>
    </source>
</reference>
<reference key="7">
    <citation type="journal article" date="1998" name="Microbiol. Mol. Biol. Rev.">
        <title>Type III protein secretion systems in bacterial pathogens of animals and plants.</title>
        <authorList>
            <person name="Hueck C.J."/>
        </authorList>
    </citation>
    <scope>REVIEW</scope>
    <scope>NOMENCLATURE</scope>
</reference>
<reference evidence="11" key="8">
    <citation type="journal article" date="2007" name="Proc. Natl. Acad. Sci. U.S.A.">
        <title>Structure of the heterotrimeric complex that regulates type III secretion needle formation.</title>
        <authorList>
            <person name="Quinaud M."/>
            <person name="Ple S."/>
            <person name="Job V."/>
            <person name="Contreras-Martel C."/>
            <person name="Simorre J.P."/>
            <person name="Attree I."/>
            <person name="Dessen A."/>
        </authorList>
    </citation>
    <scope>X-RAY CRYSTALLOGRAPHY (2.00 ANGSTROMS) OF 55-85</scope>
    <scope>INTERACTION WITH PSCE AND PSCG</scope>
    <source>
        <strain>ATCC 15692 / DSM 22644 / CIP 104116 / JCM 14847 / LMG 12228 / 1C / PRS 101 / PAO1</strain>
    </source>
</reference>
<gene>
    <name evidence="9" type="primary">sctF</name>
    <name type="synonym">pscF</name>
    <name type="ordered locus">PA1719</name>
</gene>
<evidence type="ECO:0000250" key="1">
    <source>
        <dbReference type="UniProtKB" id="P41784"/>
    </source>
</evidence>
<evidence type="ECO:0000255" key="2"/>
<evidence type="ECO:0000269" key="3">
    <source>
    </source>
</evidence>
<evidence type="ECO:0000269" key="4">
    <source>
    </source>
</evidence>
<evidence type="ECO:0000269" key="5">
    <source>
    </source>
</evidence>
<evidence type="ECO:0000269" key="6">
    <source>
    </source>
</evidence>
<evidence type="ECO:0000269" key="7">
    <source>
    </source>
</evidence>
<evidence type="ECO:0000303" key="8">
    <source>
    </source>
</evidence>
<evidence type="ECO:0000303" key="9">
    <source>
    </source>
</evidence>
<evidence type="ECO:0000305" key="10"/>
<evidence type="ECO:0007744" key="11">
    <source>
        <dbReference type="PDB" id="2UWJ"/>
    </source>
</evidence>
<evidence type="ECO:0007829" key="12">
    <source>
        <dbReference type="PDB" id="2UWJ"/>
    </source>
</evidence>
<accession>P95434</accession>
<accession>Q7DCE8</accession>
<comment type="function">
    <text evidence="3 4 6 7">Component of the type III secretion system (T3SS), also called injectisome, which is used to inject bacterial effector proteins into eukaryotic host cells, facilitating the establishment and dissemination of infection. PscF/SctF forms the external needle filament that protrudes from the bacterial surface.</text>
</comment>
<comment type="subunit">
    <text evidence="1 3 5">The core secretion machinery of the T3SS is composed of approximately 20 different proteins, including cytoplasmic components, a base, an export apparatus and a needle (By similarity). This subunit polymerizes and forms the helical needle filament (PubMed:16115870). Forms a stable heterotrimeric complex with PscE and PscG in the cytoplasm, blocking it in a monomeric state and preventing its polymerization (PubMed:16115870, PubMed:17470796).</text>
</comment>
<comment type="subcellular location">
    <subcellularLocation>
        <location evidence="3">Secreted</location>
    </subcellularLocation>
    <subcellularLocation>
        <location evidence="6">Cell surface</location>
    </subcellularLocation>
    <text>Secreted via type III secretion system (T3SS).</text>
</comment>
<comment type="domain">
    <text>The N-terminal part (1-11) is species-specific and essential for export/assembly and the function of needle.</text>
</comment>
<comment type="mass spectrometry"/>
<comment type="similarity">
    <text evidence="10">Belongs to the SctF family.</text>
</comment>
<name>SCTF_PSEAE</name>
<dbReference type="EMBL" id="U56077">
    <property type="protein sequence ID" value="AAC44777.1"/>
    <property type="molecule type" value="Genomic_DNA"/>
</dbReference>
<dbReference type="EMBL" id="AE004091">
    <property type="protein sequence ID" value="AAG05108.1"/>
    <property type="molecule type" value="Genomic_DNA"/>
</dbReference>
<dbReference type="PIR" id="G83430">
    <property type="entry name" value="G83430"/>
</dbReference>
<dbReference type="RefSeq" id="NP_250410.1">
    <property type="nucleotide sequence ID" value="NC_002516.2"/>
</dbReference>
<dbReference type="RefSeq" id="WP_003087729.1">
    <property type="nucleotide sequence ID" value="NZ_QZGE01000003.1"/>
</dbReference>
<dbReference type="PDB" id="2UWJ">
    <property type="method" value="X-ray"/>
    <property type="resolution" value="2.00 A"/>
    <property type="chains" value="F=55-85"/>
</dbReference>
<dbReference type="PDBsum" id="2UWJ"/>
<dbReference type="SMR" id="P95434"/>
<dbReference type="DIP" id="DIP-60934N"/>
<dbReference type="IntAct" id="P95434">
    <property type="interactions" value="1"/>
</dbReference>
<dbReference type="STRING" id="208964.PA1719"/>
<dbReference type="PaxDb" id="208964-PA1719"/>
<dbReference type="DNASU" id="879634"/>
<dbReference type="GeneID" id="879634"/>
<dbReference type="KEGG" id="pae:PA1719"/>
<dbReference type="PATRIC" id="fig|208964.12.peg.1781"/>
<dbReference type="PseudoCAP" id="PA1719"/>
<dbReference type="HOGENOM" id="CLU_187681_0_0_6"/>
<dbReference type="InParanoid" id="P95434"/>
<dbReference type="OrthoDB" id="5893422at2"/>
<dbReference type="BioCyc" id="PAER208964:G1FZ6-1750-MONOMER"/>
<dbReference type="EvolutionaryTrace" id="P95434"/>
<dbReference type="Proteomes" id="UP000002438">
    <property type="component" value="Chromosome"/>
</dbReference>
<dbReference type="GO" id="GO:0009986">
    <property type="term" value="C:cell surface"/>
    <property type="evidence" value="ECO:0007669"/>
    <property type="project" value="UniProtKB-SubCell"/>
</dbReference>
<dbReference type="GO" id="GO:0005576">
    <property type="term" value="C:extracellular region"/>
    <property type="evidence" value="ECO:0007669"/>
    <property type="project" value="UniProtKB-SubCell"/>
</dbReference>
<dbReference type="GO" id="GO:0030257">
    <property type="term" value="C:type III protein secretion system complex"/>
    <property type="evidence" value="ECO:0000314"/>
    <property type="project" value="PseudoCAP"/>
</dbReference>
<dbReference type="GO" id="GO:0030254">
    <property type="term" value="P:protein secretion by the type III secretion system"/>
    <property type="evidence" value="ECO:0000314"/>
    <property type="project" value="PseudoCAP"/>
</dbReference>
<dbReference type="FunFam" id="1.20.58.90:FF:000014">
    <property type="entry name" value="Type III secretion apparatus needle protein YscF"/>
    <property type="match status" value="1"/>
</dbReference>
<dbReference type="Gene3D" id="1.20.58.90">
    <property type="match status" value="1"/>
</dbReference>
<dbReference type="InterPro" id="IPR021123">
    <property type="entry name" value="T3SS_needle-like"/>
</dbReference>
<dbReference type="InterPro" id="IPR037203">
    <property type="entry name" value="T3SS_needle-like_sf"/>
</dbReference>
<dbReference type="InterPro" id="IPR011841">
    <property type="entry name" value="T3SS_needle_YscF"/>
</dbReference>
<dbReference type="NCBIfam" id="TIGR02105">
    <property type="entry name" value="III_needle"/>
    <property type="match status" value="1"/>
</dbReference>
<dbReference type="Pfam" id="PF09392">
    <property type="entry name" value="T3SS_needle_F"/>
    <property type="match status" value="1"/>
</dbReference>
<dbReference type="SUPFAM" id="SSF140129">
    <property type="entry name" value="MxiH-like"/>
    <property type="match status" value="1"/>
</dbReference>
<keyword id="KW-0002">3D-structure</keyword>
<keyword id="KW-0175">Coiled coil</keyword>
<keyword id="KW-0653">Protein transport</keyword>
<keyword id="KW-1185">Reference proteome</keyword>
<keyword id="KW-0964">Secreted</keyword>
<keyword id="KW-0813">Transport</keyword>
<keyword id="KW-0843">Virulence</keyword>
<proteinExistence type="evidence at protein level"/>
<organism>
    <name type="scientific">Pseudomonas aeruginosa (strain ATCC 15692 / DSM 22644 / CIP 104116 / JCM 14847 / LMG 12228 / 1C / PRS 101 / PAO1)</name>
    <dbReference type="NCBI Taxonomy" id="208964"/>
    <lineage>
        <taxon>Bacteria</taxon>
        <taxon>Pseudomonadati</taxon>
        <taxon>Pseudomonadota</taxon>
        <taxon>Gammaproteobacteria</taxon>
        <taxon>Pseudomonadales</taxon>
        <taxon>Pseudomonadaceae</taxon>
        <taxon>Pseudomonas</taxon>
    </lineage>
</organism>
<feature type="initiator methionine" description="Removed" evidence="10">
    <location>
        <position position="1"/>
    </location>
</feature>
<feature type="chain" id="PRO_0000249600" description="Type 3 secretion system needle filament protein">
    <location>
        <begin position="2"/>
        <end position="85"/>
    </location>
</feature>
<feature type="coiled-coil region" evidence="2">
    <location>
        <begin position="13"/>
        <end position="41"/>
    </location>
</feature>
<feature type="mutagenesis site" description="Shows a constitutive secretion phenotype." evidence="7">
    <original>D</original>
    <variation>V</variation>
    <location>
        <position position="14"/>
    </location>
</feature>
<feature type="mutagenesis site" description="Defect in the assembly of the needle on the bacterial surface." evidence="6">
    <original>D</original>
    <variation>V</variation>
    <location>
        <position position="76"/>
    </location>
</feature>
<feature type="mutagenesis site" description="Shows a constitutive secretion phenotype." evidence="7">
    <original>Q</original>
    <variation>H</variation>
    <location>
        <position position="83"/>
    </location>
</feature>
<feature type="helix" evidence="12">
    <location>
        <begin position="61"/>
        <end position="63"/>
    </location>
</feature>
<feature type="helix" evidence="12">
    <location>
        <begin position="68"/>
        <end position="82"/>
    </location>
</feature>
<protein>
    <recommendedName>
        <fullName evidence="10">Type 3 secretion system needle filament protein</fullName>
        <shortName evidence="10">T3SS needle filament protein</shortName>
    </recommendedName>
    <alternativeName>
        <fullName>Pseudomonas secretion protein F</fullName>
    </alternativeName>
    <alternativeName>
        <fullName evidence="8">Type III needle protein PscF</fullName>
    </alternativeName>
</protein>
<sequence>MAQIFNPNPGNTLDTVANALKEQANAANKDVNDAIKALQGTDNADNPALLAELQHKINKWSVIYNINSTVTRALRDLMQGILQKI</sequence>